<comment type="function">
    <text evidence="1">Tooth-associated epithelia protein that may participate in structuring the basal lamina at cell-tooth interface.</text>
</comment>
<comment type="subcellular location">
    <subcellularLocation>
        <location evidence="1">Secreted</location>
    </subcellularLocation>
    <text evidence="3">Localizes at the cell-tooth interface with AMTN and ODAM.</text>
</comment>
<comment type="tissue specificity">
    <text evidence="3">Expressed in enamel organ.</text>
</comment>
<gene>
    <name evidence="5" type="primary">Scpppq1</name>
    <name type="synonym">Gm17660</name>
</gene>
<protein>
    <recommendedName>
        <fullName evidence="4">Secretory calcium-binding phosphoprotein proline-glutamine-rich 1</fullName>
    </recommendedName>
</protein>
<feature type="signal peptide" evidence="2">
    <location>
        <begin position="1"/>
        <end position="15"/>
    </location>
</feature>
<feature type="chain" id="PRO_5015087622" description="Secretory calcium-binding phosphoprotein proline-glutamine-rich 1" evidence="2">
    <location>
        <begin position="16"/>
        <end position="90"/>
    </location>
</feature>
<evidence type="ECO:0000250" key="1">
    <source>
        <dbReference type="UniProtKB" id="D6QY17"/>
    </source>
</evidence>
<evidence type="ECO:0000255" key="2"/>
<evidence type="ECO:0000269" key="3">
    <source>
    </source>
</evidence>
<evidence type="ECO:0000303" key="4">
    <source>
    </source>
</evidence>
<evidence type="ECO:0000312" key="5">
    <source>
        <dbReference type="MGI" id="MGI:4937294"/>
    </source>
</evidence>
<sequence length="90" mass="9783">MQLFLLAALLSAAAALPIPLGQSGGSSSEQRFNLYAPQILPFFPPFPLPQAPLIPIPFPFPFDPNQVLTPNQLLELITSILNQLQGFLGR</sequence>
<name>SCPPQ_MOUSE</name>
<proteinExistence type="evidence at transcript level"/>
<dbReference type="EMBL" id="EU642618">
    <property type="protein sequence ID" value="ACF33446.1"/>
    <property type="molecule type" value="mRNA"/>
</dbReference>
<dbReference type="EMBL" id="HM015622">
    <property type="protein sequence ID" value="ADG34820.1"/>
    <property type="molecule type" value="mRNA"/>
</dbReference>
<dbReference type="EMBL" id="HM015623">
    <property type="protein sequence ID" value="ADG34821.1"/>
    <property type="molecule type" value="mRNA"/>
</dbReference>
<dbReference type="EMBL" id="AL714024">
    <property type="status" value="NOT_ANNOTATED_CDS"/>
    <property type="molecule type" value="Genomic_DNA"/>
</dbReference>
<dbReference type="CCDS" id="CCDS51577.1"/>
<dbReference type="RefSeq" id="NP_001157244.1">
    <property type="nucleotide sequence ID" value="NM_001163772.1"/>
</dbReference>
<dbReference type="SMR" id="B9UIU9"/>
<dbReference type="STRING" id="10090.ENSMUSP00000143623"/>
<dbReference type="PaxDb" id="10090-ENSMUSP00000132880"/>
<dbReference type="Ensembl" id="ENSMUST00000164471.8">
    <property type="protein sequence ID" value="ENSMUSP00000132880.2"/>
    <property type="gene ID" value="ENSMUSG00000091034.9"/>
</dbReference>
<dbReference type="Ensembl" id="ENSMUST00000178967.2">
    <property type="protein sequence ID" value="ENSMUSP00000136896.2"/>
    <property type="gene ID" value="ENSMUSG00000091034.9"/>
</dbReference>
<dbReference type="Ensembl" id="ENSMUST00000198485.5">
    <property type="protein sequence ID" value="ENSMUSP00000143623.2"/>
    <property type="gene ID" value="ENSMUSG00000091034.9"/>
</dbReference>
<dbReference type="GeneID" id="100271704"/>
<dbReference type="KEGG" id="mmu:100271704"/>
<dbReference type="UCSC" id="uc012dzy.2">
    <property type="organism name" value="mouse"/>
</dbReference>
<dbReference type="AGR" id="MGI:4937294"/>
<dbReference type="CTD" id="105377321"/>
<dbReference type="MGI" id="MGI:4937294">
    <property type="gene designation" value="Scpppq1"/>
</dbReference>
<dbReference type="VEuPathDB" id="HostDB:ENSMUSG00000091034"/>
<dbReference type="GeneTree" id="ENSGT00700000106112"/>
<dbReference type="HOGENOM" id="CLU_2440313_0_0_1"/>
<dbReference type="OMA" id="FNFYPPQ"/>
<dbReference type="BioGRID-ORCS" id="100271704">
    <property type="hits" value="0 hits in 71 CRISPR screens"/>
</dbReference>
<dbReference type="PRO" id="PR:B9UIU9"/>
<dbReference type="Proteomes" id="UP000000589">
    <property type="component" value="Chromosome 5"/>
</dbReference>
<dbReference type="RNAct" id="B9UIU9">
    <property type="molecule type" value="protein"/>
</dbReference>
<dbReference type="Bgee" id="ENSMUSG00000091034">
    <property type="expression patterns" value="Expressed in epiblast cell in embryo and 26 other cell types or tissues"/>
</dbReference>
<dbReference type="GO" id="GO:0005576">
    <property type="term" value="C:extracellular region"/>
    <property type="evidence" value="ECO:0007669"/>
    <property type="project" value="UniProtKB-SubCell"/>
</dbReference>
<keyword id="KW-1185">Reference proteome</keyword>
<keyword id="KW-0964">Secreted</keyword>
<keyword id="KW-0732">Signal</keyword>
<reference key="1">
    <citation type="journal article" date="2006" name="Eur. J. Oral Sci.">
        <title>Identification of secreted and membrane proteins in the rat incisor enamel organ using a signal-trap screening approach.</title>
        <authorList>
            <person name="Moffatt P."/>
            <person name="Smith C.E."/>
            <person name="Sooknanan R."/>
            <person name="St-Arnaud R."/>
            <person name="Nanci A."/>
        </authorList>
    </citation>
    <scope>NUCLEOTIDE SEQUENCE [MRNA]</scope>
    <source>
        <strain>CD-1</strain>
        <tissue>Mandible</tissue>
    </source>
</reference>
<reference key="2">
    <citation type="journal article" date="2009" name="Dev. Genes Evol.">
        <title>The SCPP gene repertoire in bony vertebrates and graded differences in mineralized tissues.</title>
        <authorList>
            <person name="Kawasaki K."/>
        </authorList>
    </citation>
    <scope>NUCLEOTIDE SEQUENCE [MRNA]</scope>
</reference>
<reference key="3">
    <citation type="journal article" date="2014" name="Cell Tissue Res.">
        <title>Characterisation of secretory calcium-binding phosphoprotein-proline-glutamine-rich 1: a novel basal lamina component expressed at cell-tooth interfaces.</title>
        <authorList>
            <person name="Moffatt P."/>
            <person name="Wazen R.M."/>
            <person name="Dos Santos Neves J."/>
            <person name="Nanci A."/>
        </authorList>
    </citation>
    <scope>NUCLEOTIDE SEQUENCE [MRNA]</scope>
    <scope>TISSUE SPECIFICITY</scope>
    <source>
        <strain>CD-1</strain>
        <tissue>Mandible</tissue>
    </source>
</reference>
<reference key="4">
    <citation type="journal article" date="2009" name="PLoS Biol.">
        <title>Lineage-specific biology revealed by a finished genome assembly of the mouse.</title>
        <authorList>
            <person name="Church D.M."/>
            <person name="Goodstadt L."/>
            <person name="Hillier L.W."/>
            <person name="Zody M.C."/>
            <person name="Goldstein S."/>
            <person name="She X."/>
            <person name="Bult C.J."/>
            <person name="Agarwala R."/>
            <person name="Cherry J.L."/>
            <person name="DiCuccio M."/>
            <person name="Hlavina W."/>
            <person name="Kapustin Y."/>
            <person name="Meric P."/>
            <person name="Maglott D."/>
            <person name="Birtle Z."/>
            <person name="Marques A.C."/>
            <person name="Graves T."/>
            <person name="Zhou S."/>
            <person name="Teague B."/>
            <person name="Potamousis K."/>
            <person name="Churas C."/>
            <person name="Place M."/>
            <person name="Herschleb J."/>
            <person name="Runnheim R."/>
            <person name="Forrest D."/>
            <person name="Amos-Landgraf J."/>
            <person name="Schwartz D.C."/>
            <person name="Cheng Z."/>
            <person name="Lindblad-Toh K."/>
            <person name="Eichler E.E."/>
            <person name="Ponting C.P."/>
        </authorList>
    </citation>
    <scope>NUCLEOTIDE SEQUENCE [LARGE SCALE GENOMIC DNA]</scope>
    <source>
        <strain>C57BL/6J</strain>
    </source>
</reference>
<reference key="5">
    <citation type="journal article" date="2017" name="Sci. Rep.">
        <title>Interactions of AMTN, ODAM and SCPPPQ1 proteins of a specialized basal lamina that attaches epithelial cells to tooth mineral.</title>
        <authorList>
            <person name="Fouillen A."/>
            <person name="Dos Santos Neves J."/>
            <person name="Mary C."/>
            <person name="Castonguay J.D."/>
            <person name="Moffatt P."/>
            <person name="Baron C."/>
            <person name="Nanci A."/>
        </authorList>
    </citation>
    <scope>TISSUE SPECIFICITY</scope>
    <scope>SUBCELLULAR LOCATION</scope>
</reference>
<accession>B9UIU9</accession>
<organism>
    <name type="scientific">Mus musculus</name>
    <name type="common">Mouse</name>
    <dbReference type="NCBI Taxonomy" id="10090"/>
    <lineage>
        <taxon>Eukaryota</taxon>
        <taxon>Metazoa</taxon>
        <taxon>Chordata</taxon>
        <taxon>Craniata</taxon>
        <taxon>Vertebrata</taxon>
        <taxon>Euteleostomi</taxon>
        <taxon>Mammalia</taxon>
        <taxon>Eutheria</taxon>
        <taxon>Euarchontoglires</taxon>
        <taxon>Glires</taxon>
        <taxon>Rodentia</taxon>
        <taxon>Myomorpha</taxon>
        <taxon>Muroidea</taxon>
        <taxon>Muridae</taxon>
        <taxon>Murinae</taxon>
        <taxon>Mus</taxon>
        <taxon>Mus</taxon>
    </lineage>
</organism>